<reference key="1">
    <citation type="journal article" date="2006" name="J. Bacteriol.">
        <title>Chromosome rearrangement and diversification of Francisella tularensis revealed by the type B (OSU18) genome sequence.</title>
        <authorList>
            <person name="Petrosino J.F."/>
            <person name="Xiang Q."/>
            <person name="Karpathy S.E."/>
            <person name="Jiang H."/>
            <person name="Yerrapragada S."/>
            <person name="Liu Y."/>
            <person name="Gioia J."/>
            <person name="Hemphill L."/>
            <person name="Gonzalez A."/>
            <person name="Raghavan T.M."/>
            <person name="Uzman A."/>
            <person name="Fox G.E."/>
            <person name="Highlander S."/>
            <person name="Reichard M."/>
            <person name="Morton R.J."/>
            <person name="Clinkenbeard K.D."/>
            <person name="Weinstock G.M."/>
        </authorList>
    </citation>
    <scope>NUCLEOTIDE SEQUENCE [LARGE SCALE GENOMIC DNA]</scope>
    <source>
        <strain>OSU18</strain>
    </source>
</reference>
<feature type="chain" id="PRO_1000049507" description="Glycerol-3-phosphate dehydrogenase [NAD(P)+]">
    <location>
        <begin position="1"/>
        <end position="332"/>
    </location>
</feature>
<feature type="active site" description="Proton acceptor" evidence="1">
    <location>
        <position position="191"/>
    </location>
</feature>
<feature type="binding site" evidence="1">
    <location>
        <position position="13"/>
    </location>
    <ligand>
        <name>NADPH</name>
        <dbReference type="ChEBI" id="CHEBI:57783"/>
    </ligand>
</feature>
<feature type="binding site" evidence="1">
    <location>
        <position position="34"/>
    </location>
    <ligand>
        <name>NADPH</name>
        <dbReference type="ChEBI" id="CHEBI:57783"/>
    </ligand>
</feature>
<feature type="binding site" evidence="1">
    <location>
        <position position="108"/>
    </location>
    <ligand>
        <name>NADPH</name>
        <dbReference type="ChEBI" id="CHEBI:57783"/>
    </ligand>
</feature>
<feature type="binding site" evidence="1">
    <location>
        <position position="108"/>
    </location>
    <ligand>
        <name>sn-glycerol 3-phosphate</name>
        <dbReference type="ChEBI" id="CHEBI:57597"/>
    </ligand>
</feature>
<feature type="binding site" evidence="1">
    <location>
        <position position="136"/>
    </location>
    <ligand>
        <name>sn-glycerol 3-phosphate</name>
        <dbReference type="ChEBI" id="CHEBI:57597"/>
    </ligand>
</feature>
<feature type="binding site" evidence="1">
    <location>
        <position position="138"/>
    </location>
    <ligand>
        <name>sn-glycerol 3-phosphate</name>
        <dbReference type="ChEBI" id="CHEBI:57597"/>
    </ligand>
</feature>
<feature type="binding site" evidence="1">
    <location>
        <position position="140"/>
    </location>
    <ligand>
        <name>NADPH</name>
        <dbReference type="ChEBI" id="CHEBI:57783"/>
    </ligand>
</feature>
<feature type="binding site" evidence="1">
    <location>
        <position position="191"/>
    </location>
    <ligand>
        <name>sn-glycerol 3-phosphate</name>
        <dbReference type="ChEBI" id="CHEBI:57597"/>
    </ligand>
</feature>
<feature type="binding site" evidence="1">
    <location>
        <position position="244"/>
    </location>
    <ligand>
        <name>sn-glycerol 3-phosphate</name>
        <dbReference type="ChEBI" id="CHEBI:57597"/>
    </ligand>
</feature>
<feature type="binding site" evidence="1">
    <location>
        <position position="254"/>
    </location>
    <ligand>
        <name>sn-glycerol 3-phosphate</name>
        <dbReference type="ChEBI" id="CHEBI:57597"/>
    </ligand>
</feature>
<feature type="binding site" evidence="1">
    <location>
        <position position="255"/>
    </location>
    <ligand>
        <name>NADPH</name>
        <dbReference type="ChEBI" id="CHEBI:57783"/>
    </ligand>
</feature>
<feature type="binding site" evidence="1">
    <location>
        <position position="255"/>
    </location>
    <ligand>
        <name>sn-glycerol 3-phosphate</name>
        <dbReference type="ChEBI" id="CHEBI:57597"/>
    </ligand>
</feature>
<feature type="binding site" evidence="1">
    <location>
        <position position="256"/>
    </location>
    <ligand>
        <name>sn-glycerol 3-phosphate</name>
        <dbReference type="ChEBI" id="CHEBI:57597"/>
    </ligand>
</feature>
<feature type="binding site" evidence="1">
    <location>
        <position position="279"/>
    </location>
    <ligand>
        <name>NADPH</name>
        <dbReference type="ChEBI" id="CHEBI:57783"/>
    </ligand>
</feature>
<feature type="binding site" evidence="1">
    <location>
        <position position="281"/>
    </location>
    <ligand>
        <name>NADPH</name>
        <dbReference type="ChEBI" id="CHEBI:57783"/>
    </ligand>
</feature>
<protein>
    <recommendedName>
        <fullName evidence="1">Glycerol-3-phosphate dehydrogenase [NAD(P)+]</fullName>
        <ecNumber evidence="1">1.1.1.94</ecNumber>
    </recommendedName>
    <alternativeName>
        <fullName evidence="1">NAD(P)(+)-dependent glycerol-3-phosphate dehydrogenase</fullName>
    </alternativeName>
    <alternativeName>
        <fullName evidence="1">NAD(P)H-dependent dihydroxyacetone-phosphate reductase</fullName>
    </alternativeName>
</protein>
<proteinExistence type="inferred from homology"/>
<name>GPDA_FRATO</name>
<organism>
    <name type="scientific">Francisella tularensis subsp. holarctica (strain OSU18)</name>
    <dbReference type="NCBI Taxonomy" id="393011"/>
    <lineage>
        <taxon>Bacteria</taxon>
        <taxon>Pseudomonadati</taxon>
        <taxon>Pseudomonadota</taxon>
        <taxon>Gammaproteobacteria</taxon>
        <taxon>Thiotrichales</taxon>
        <taxon>Francisellaceae</taxon>
        <taxon>Francisella</taxon>
    </lineage>
</organism>
<accession>Q0BNG9</accession>
<sequence length="332" mass="36677">MQKNILVLGAGAWGTALALQLAYRGHNVRINSWKAEHNEQMLKDNNNHKYLPSIEKFPSRLKAIQDWQANIIEFDSILVATPSSGFKNTILELKECILPQQNIISATKGFCHDSYALLSEIAEDILPTTKFALLTGPSFAKELANQLPTAVVVASKDINYARYVQELFSNENFRCYTTTDIIGAQVGGAVKNVLAITAGIAAGMEFGVNAHAALITRGLAEIKKLGLKLGANSETFIGLSCLGDLLLTCSDNQSRNRRFGLYLGQGMTIQQALKEVNNVVEGYFTAKAVYNFAKKHNVEMPLVFATYRILYEAADPRDIVKELMTRQLKNEN</sequence>
<evidence type="ECO:0000255" key="1">
    <source>
        <dbReference type="HAMAP-Rule" id="MF_00394"/>
    </source>
</evidence>
<keyword id="KW-0963">Cytoplasm</keyword>
<keyword id="KW-0444">Lipid biosynthesis</keyword>
<keyword id="KW-0443">Lipid metabolism</keyword>
<keyword id="KW-0520">NAD</keyword>
<keyword id="KW-0521">NADP</keyword>
<keyword id="KW-0547">Nucleotide-binding</keyword>
<keyword id="KW-0560">Oxidoreductase</keyword>
<keyword id="KW-0594">Phospholipid biosynthesis</keyword>
<keyword id="KW-1208">Phospholipid metabolism</keyword>
<gene>
    <name evidence="1" type="primary">gpsA</name>
    <name type="ordered locus">FTH_0365</name>
</gene>
<comment type="function">
    <text evidence="1">Catalyzes the reduction of the glycolytic intermediate dihydroxyacetone phosphate (DHAP) to sn-glycerol 3-phosphate (G3P), the key precursor for phospholipid synthesis.</text>
</comment>
<comment type="catalytic activity">
    <reaction evidence="1">
        <text>sn-glycerol 3-phosphate + NAD(+) = dihydroxyacetone phosphate + NADH + H(+)</text>
        <dbReference type="Rhea" id="RHEA:11092"/>
        <dbReference type="ChEBI" id="CHEBI:15378"/>
        <dbReference type="ChEBI" id="CHEBI:57540"/>
        <dbReference type="ChEBI" id="CHEBI:57597"/>
        <dbReference type="ChEBI" id="CHEBI:57642"/>
        <dbReference type="ChEBI" id="CHEBI:57945"/>
        <dbReference type="EC" id="1.1.1.94"/>
    </reaction>
    <physiologicalReaction direction="right-to-left" evidence="1">
        <dbReference type="Rhea" id="RHEA:11094"/>
    </physiologicalReaction>
</comment>
<comment type="catalytic activity">
    <reaction evidence="1">
        <text>sn-glycerol 3-phosphate + NADP(+) = dihydroxyacetone phosphate + NADPH + H(+)</text>
        <dbReference type="Rhea" id="RHEA:11096"/>
        <dbReference type="ChEBI" id="CHEBI:15378"/>
        <dbReference type="ChEBI" id="CHEBI:57597"/>
        <dbReference type="ChEBI" id="CHEBI:57642"/>
        <dbReference type="ChEBI" id="CHEBI:57783"/>
        <dbReference type="ChEBI" id="CHEBI:58349"/>
        <dbReference type="EC" id="1.1.1.94"/>
    </reaction>
    <physiologicalReaction direction="right-to-left" evidence="1">
        <dbReference type="Rhea" id="RHEA:11098"/>
    </physiologicalReaction>
</comment>
<comment type="pathway">
    <text evidence="1">Membrane lipid metabolism; glycerophospholipid metabolism.</text>
</comment>
<comment type="subcellular location">
    <subcellularLocation>
        <location evidence="1">Cytoplasm</location>
    </subcellularLocation>
</comment>
<comment type="similarity">
    <text evidence="1">Belongs to the NAD-dependent glycerol-3-phosphate dehydrogenase family.</text>
</comment>
<dbReference type="EC" id="1.1.1.94" evidence="1"/>
<dbReference type="EMBL" id="CP000437">
    <property type="protein sequence ID" value="ABI82365.1"/>
    <property type="molecule type" value="Genomic_DNA"/>
</dbReference>
<dbReference type="RefSeq" id="WP_003014572.1">
    <property type="nucleotide sequence ID" value="NC_017463.1"/>
</dbReference>
<dbReference type="SMR" id="Q0BNG9"/>
<dbReference type="KEGG" id="fth:FTH_0365"/>
<dbReference type="UniPathway" id="UPA00940"/>
<dbReference type="GO" id="GO:0005829">
    <property type="term" value="C:cytosol"/>
    <property type="evidence" value="ECO:0007669"/>
    <property type="project" value="TreeGrafter"/>
</dbReference>
<dbReference type="GO" id="GO:0047952">
    <property type="term" value="F:glycerol-3-phosphate dehydrogenase [NAD(P)+] activity"/>
    <property type="evidence" value="ECO:0007669"/>
    <property type="project" value="UniProtKB-UniRule"/>
</dbReference>
<dbReference type="GO" id="GO:0051287">
    <property type="term" value="F:NAD binding"/>
    <property type="evidence" value="ECO:0007669"/>
    <property type="project" value="InterPro"/>
</dbReference>
<dbReference type="GO" id="GO:0005975">
    <property type="term" value="P:carbohydrate metabolic process"/>
    <property type="evidence" value="ECO:0007669"/>
    <property type="project" value="InterPro"/>
</dbReference>
<dbReference type="GO" id="GO:0046167">
    <property type="term" value="P:glycerol-3-phosphate biosynthetic process"/>
    <property type="evidence" value="ECO:0007669"/>
    <property type="project" value="UniProtKB-UniRule"/>
</dbReference>
<dbReference type="GO" id="GO:0046168">
    <property type="term" value="P:glycerol-3-phosphate catabolic process"/>
    <property type="evidence" value="ECO:0007669"/>
    <property type="project" value="InterPro"/>
</dbReference>
<dbReference type="GO" id="GO:0046474">
    <property type="term" value="P:glycerophospholipid biosynthetic process"/>
    <property type="evidence" value="ECO:0007669"/>
    <property type="project" value="TreeGrafter"/>
</dbReference>
<dbReference type="FunFam" id="1.10.1040.10:FF:000001">
    <property type="entry name" value="Glycerol-3-phosphate dehydrogenase [NAD(P)+]"/>
    <property type="match status" value="1"/>
</dbReference>
<dbReference type="FunFam" id="3.40.50.720:FF:000019">
    <property type="entry name" value="Glycerol-3-phosphate dehydrogenase [NAD(P)+]"/>
    <property type="match status" value="1"/>
</dbReference>
<dbReference type="Gene3D" id="1.10.1040.10">
    <property type="entry name" value="N-(1-d-carboxylethyl)-l-norvaline Dehydrogenase, domain 2"/>
    <property type="match status" value="1"/>
</dbReference>
<dbReference type="Gene3D" id="3.40.50.720">
    <property type="entry name" value="NAD(P)-binding Rossmann-like Domain"/>
    <property type="match status" value="1"/>
</dbReference>
<dbReference type="HAMAP" id="MF_00394">
    <property type="entry name" value="NAD_Glyc3P_dehydrog"/>
    <property type="match status" value="1"/>
</dbReference>
<dbReference type="InterPro" id="IPR008927">
    <property type="entry name" value="6-PGluconate_DH-like_C_sf"/>
</dbReference>
<dbReference type="InterPro" id="IPR013328">
    <property type="entry name" value="6PGD_dom2"/>
</dbReference>
<dbReference type="InterPro" id="IPR006168">
    <property type="entry name" value="G3P_DH_NAD-dep"/>
</dbReference>
<dbReference type="InterPro" id="IPR006109">
    <property type="entry name" value="G3P_DH_NAD-dep_C"/>
</dbReference>
<dbReference type="InterPro" id="IPR011128">
    <property type="entry name" value="G3P_DH_NAD-dep_N"/>
</dbReference>
<dbReference type="InterPro" id="IPR036291">
    <property type="entry name" value="NAD(P)-bd_dom_sf"/>
</dbReference>
<dbReference type="NCBIfam" id="NF000940">
    <property type="entry name" value="PRK00094.1-2"/>
    <property type="match status" value="1"/>
</dbReference>
<dbReference type="NCBIfam" id="NF000942">
    <property type="entry name" value="PRK00094.1-4"/>
    <property type="match status" value="1"/>
</dbReference>
<dbReference type="PANTHER" id="PTHR11728">
    <property type="entry name" value="GLYCEROL-3-PHOSPHATE DEHYDROGENASE"/>
    <property type="match status" value="1"/>
</dbReference>
<dbReference type="PANTHER" id="PTHR11728:SF1">
    <property type="entry name" value="GLYCEROL-3-PHOSPHATE DEHYDROGENASE [NAD(+)] 2, CHLOROPLASTIC"/>
    <property type="match status" value="1"/>
</dbReference>
<dbReference type="Pfam" id="PF07479">
    <property type="entry name" value="NAD_Gly3P_dh_C"/>
    <property type="match status" value="1"/>
</dbReference>
<dbReference type="Pfam" id="PF01210">
    <property type="entry name" value="NAD_Gly3P_dh_N"/>
    <property type="match status" value="1"/>
</dbReference>
<dbReference type="PIRSF" id="PIRSF000114">
    <property type="entry name" value="Glycerol-3-P_dh"/>
    <property type="match status" value="1"/>
</dbReference>
<dbReference type="PRINTS" id="PR00077">
    <property type="entry name" value="GPDHDRGNASE"/>
</dbReference>
<dbReference type="SUPFAM" id="SSF48179">
    <property type="entry name" value="6-phosphogluconate dehydrogenase C-terminal domain-like"/>
    <property type="match status" value="1"/>
</dbReference>
<dbReference type="SUPFAM" id="SSF51735">
    <property type="entry name" value="NAD(P)-binding Rossmann-fold domains"/>
    <property type="match status" value="1"/>
</dbReference>
<dbReference type="PROSITE" id="PS00957">
    <property type="entry name" value="NAD_G3PDH"/>
    <property type="match status" value="1"/>
</dbReference>